<reference key="1">
    <citation type="journal article" date="2008" name="Cell. Mol. Life Sci.">
        <title>Molecular diversity and evolution of cystine knot toxins of the tarantula Chilobrachys jingzhao.</title>
        <authorList>
            <person name="Chen J."/>
            <person name="Deng M."/>
            <person name="He Q."/>
            <person name="Meng E."/>
            <person name="Jiang L."/>
            <person name="Liao Z."/>
            <person name="Rong M."/>
            <person name="Liang S."/>
        </authorList>
    </citation>
    <scope>NUCLEOTIDE SEQUENCE [LARGE SCALE MRNA]</scope>
    <source>
        <tissue>Venom gland</tissue>
    </source>
</reference>
<reference key="2">
    <citation type="journal article" date="2007" name="Proteomics">
        <title>Proteomic and peptidomic analysis of the venom from Chinese tarantula Chilobrachys jingzhao.</title>
        <authorList>
            <person name="Liao Z."/>
            <person name="Cao J."/>
            <person name="Li S."/>
            <person name="Yan X."/>
            <person name="Hu W."/>
            <person name="He Q."/>
            <person name="Chen J."/>
            <person name="Tang J."/>
            <person name="Xie J."/>
            <person name="Liang S."/>
        </authorList>
    </citation>
    <scope>PROTEIN SEQUENCE OF 30-63</scope>
    <scope>IDENTIFICATION BY MASS SPECTROMETRY</scope>
    <scope>AMIDATION AT PRO-63</scope>
    <source>
        <tissue>Venom</tissue>
    </source>
</reference>
<name>JZ12A_CHIGU</name>
<accession>B1P1C4</accession>
<dbReference type="EMBL" id="EU233855">
    <property type="protein sequence ID" value="ABY71674.1"/>
    <property type="molecule type" value="mRNA"/>
</dbReference>
<dbReference type="EMBL" id="EU233856">
    <property type="protein sequence ID" value="ABY71675.1"/>
    <property type="molecule type" value="mRNA"/>
</dbReference>
<dbReference type="SMR" id="B1P1C4"/>
<dbReference type="ArachnoServer" id="AS000804">
    <property type="toxin name" value="U1-theraphotoxin-Cg1d"/>
</dbReference>
<dbReference type="GO" id="GO:0005576">
    <property type="term" value="C:extracellular region"/>
    <property type="evidence" value="ECO:0007669"/>
    <property type="project" value="UniProtKB-SubCell"/>
</dbReference>
<dbReference type="GO" id="GO:0008200">
    <property type="term" value="F:ion channel inhibitor activity"/>
    <property type="evidence" value="ECO:0007669"/>
    <property type="project" value="InterPro"/>
</dbReference>
<dbReference type="GO" id="GO:0090729">
    <property type="term" value="F:toxin activity"/>
    <property type="evidence" value="ECO:0007669"/>
    <property type="project" value="UniProtKB-KW"/>
</dbReference>
<dbReference type="InterPro" id="IPR011696">
    <property type="entry name" value="Huwentoxin-1"/>
</dbReference>
<dbReference type="InterPro" id="IPR013140">
    <property type="entry name" value="Huwentoxin_CS1"/>
</dbReference>
<dbReference type="Pfam" id="PF07740">
    <property type="entry name" value="Toxin_12"/>
    <property type="match status" value="1"/>
</dbReference>
<dbReference type="SUPFAM" id="SSF57059">
    <property type="entry name" value="omega toxin-like"/>
    <property type="match status" value="1"/>
</dbReference>
<dbReference type="PROSITE" id="PS60021">
    <property type="entry name" value="HWTX_1"/>
    <property type="match status" value="1"/>
</dbReference>
<sequence length="66" mass="7140">MKMSALFVIFGLALLFCNSFAAELKATGRGCGGLMDGCDGKSTFCCSGFNCSPTWKWCVYARPGRR</sequence>
<proteinExistence type="evidence at protein level"/>
<comment type="function">
    <text>Probable ion channel inhibitor.</text>
</comment>
<comment type="subcellular location">
    <subcellularLocation>
        <location>Secreted</location>
    </subcellularLocation>
</comment>
<comment type="tissue specificity">
    <text>Expressed by the venom gland.</text>
</comment>
<comment type="domain">
    <text evidence="1">The presence of a 'disulfide through disulfide knot' structurally defines this protein as a knottin.</text>
</comment>
<comment type="similarity">
    <text evidence="4">Belongs to the neurotoxin 10 (Hwtx-1) family. 46 (Jztx-7/10/12) subfamily.</text>
</comment>
<evidence type="ECO:0000250" key="1"/>
<evidence type="ECO:0000255" key="2"/>
<evidence type="ECO:0000269" key="3">
    <source>
    </source>
</evidence>
<evidence type="ECO:0000305" key="4"/>
<keyword id="KW-0027">Amidation</keyword>
<keyword id="KW-0903">Direct protein sequencing</keyword>
<keyword id="KW-1015">Disulfide bond</keyword>
<keyword id="KW-0872">Ion channel impairing toxin</keyword>
<keyword id="KW-0960">Knottin</keyword>
<keyword id="KW-0964">Secreted</keyword>
<keyword id="KW-0732">Signal</keyword>
<keyword id="KW-0800">Toxin</keyword>
<protein>
    <recommendedName>
        <fullName>U1-theraphotoxin-Cg1d 1</fullName>
        <shortName>U1-TRTX-Cg1d</shortName>
    </recommendedName>
    <alternativeName>
        <fullName>Jingzhaotoxin-12.1</fullName>
        <shortName>JZTX-12.1</shortName>
    </alternativeName>
    <alternativeName>
        <fullName>Peptide F4-15.91</fullName>
    </alternativeName>
</protein>
<feature type="signal peptide" evidence="2">
    <location>
        <begin position="1"/>
        <end position="21"/>
    </location>
</feature>
<feature type="propeptide" id="PRO_0000398415" evidence="3">
    <location>
        <begin position="22"/>
        <end position="29"/>
    </location>
</feature>
<feature type="peptide" id="PRO_0000398416" description="U1-theraphotoxin-Cg1d 1">
    <location>
        <begin position="30"/>
        <end position="63"/>
    </location>
</feature>
<feature type="modified residue" description="Proline amide" evidence="3">
    <location>
        <position position="63"/>
    </location>
</feature>
<feature type="disulfide bond" evidence="1">
    <location>
        <begin position="31"/>
        <end position="46"/>
    </location>
</feature>
<feature type="disulfide bond" evidence="1">
    <location>
        <begin position="38"/>
        <end position="51"/>
    </location>
</feature>
<feature type="disulfide bond" evidence="1">
    <location>
        <begin position="45"/>
        <end position="58"/>
    </location>
</feature>
<organism>
    <name type="scientific">Chilobrachys guangxiensis</name>
    <name type="common">Chinese earth tiger tarantula</name>
    <name type="synonym">Chilobrachys jingzhao</name>
    <dbReference type="NCBI Taxonomy" id="278060"/>
    <lineage>
        <taxon>Eukaryota</taxon>
        <taxon>Metazoa</taxon>
        <taxon>Ecdysozoa</taxon>
        <taxon>Arthropoda</taxon>
        <taxon>Chelicerata</taxon>
        <taxon>Arachnida</taxon>
        <taxon>Araneae</taxon>
        <taxon>Mygalomorphae</taxon>
        <taxon>Theraphosidae</taxon>
        <taxon>Chilobrachys</taxon>
    </lineage>
</organism>